<keyword id="KW-0963">Cytoplasm</keyword>
<keyword id="KW-0251">Elongation factor</keyword>
<keyword id="KW-0648">Protein biosynthesis</keyword>
<keyword id="KW-1185">Reference proteome</keyword>
<dbReference type="EMBL" id="AE009948">
    <property type="protein sequence ID" value="AAN00559.1"/>
    <property type="molecule type" value="Genomic_DNA"/>
</dbReference>
<dbReference type="RefSeq" id="NP_688686.1">
    <property type="nucleotide sequence ID" value="NC_004116.1"/>
</dbReference>
<dbReference type="RefSeq" id="WP_000568636.1">
    <property type="nucleotide sequence ID" value="NC_004116.1"/>
</dbReference>
<dbReference type="SMR" id="P64041"/>
<dbReference type="STRING" id="208435.SAG1695"/>
<dbReference type="GeneID" id="66886541"/>
<dbReference type="KEGG" id="sag:SAG1695"/>
<dbReference type="PATRIC" id="fig|208435.3.peg.1704"/>
<dbReference type="HOGENOM" id="CLU_074944_3_0_9"/>
<dbReference type="OrthoDB" id="9801844at2"/>
<dbReference type="UniPathway" id="UPA00345"/>
<dbReference type="Proteomes" id="UP000000821">
    <property type="component" value="Chromosome"/>
</dbReference>
<dbReference type="GO" id="GO:0005737">
    <property type="term" value="C:cytoplasm"/>
    <property type="evidence" value="ECO:0007669"/>
    <property type="project" value="UniProtKB-SubCell"/>
</dbReference>
<dbReference type="GO" id="GO:0003746">
    <property type="term" value="F:translation elongation factor activity"/>
    <property type="evidence" value="ECO:0007669"/>
    <property type="project" value="UniProtKB-UniRule"/>
</dbReference>
<dbReference type="GO" id="GO:0043043">
    <property type="term" value="P:peptide biosynthetic process"/>
    <property type="evidence" value="ECO:0007669"/>
    <property type="project" value="InterPro"/>
</dbReference>
<dbReference type="CDD" id="cd04470">
    <property type="entry name" value="S1_EF-P_repeat_1"/>
    <property type="match status" value="1"/>
</dbReference>
<dbReference type="CDD" id="cd05794">
    <property type="entry name" value="S1_EF-P_repeat_2"/>
    <property type="match status" value="1"/>
</dbReference>
<dbReference type="FunFam" id="2.30.30.30:FF:000003">
    <property type="entry name" value="Elongation factor P"/>
    <property type="match status" value="1"/>
</dbReference>
<dbReference type="FunFam" id="2.40.50.140:FF:000004">
    <property type="entry name" value="Elongation factor P"/>
    <property type="match status" value="1"/>
</dbReference>
<dbReference type="FunFam" id="2.40.50.140:FF:000009">
    <property type="entry name" value="Elongation factor P"/>
    <property type="match status" value="1"/>
</dbReference>
<dbReference type="Gene3D" id="2.30.30.30">
    <property type="match status" value="1"/>
</dbReference>
<dbReference type="Gene3D" id="2.40.50.140">
    <property type="entry name" value="Nucleic acid-binding proteins"/>
    <property type="match status" value="2"/>
</dbReference>
<dbReference type="HAMAP" id="MF_00141">
    <property type="entry name" value="EF_P"/>
    <property type="match status" value="1"/>
</dbReference>
<dbReference type="InterPro" id="IPR015365">
    <property type="entry name" value="Elong-fact-P_C"/>
</dbReference>
<dbReference type="InterPro" id="IPR012340">
    <property type="entry name" value="NA-bd_OB-fold"/>
</dbReference>
<dbReference type="InterPro" id="IPR014722">
    <property type="entry name" value="Rib_uL2_dom2"/>
</dbReference>
<dbReference type="InterPro" id="IPR020599">
    <property type="entry name" value="Transl_elong_fac_P/YeiP"/>
</dbReference>
<dbReference type="InterPro" id="IPR013185">
    <property type="entry name" value="Transl_elong_KOW-like"/>
</dbReference>
<dbReference type="InterPro" id="IPR001059">
    <property type="entry name" value="Transl_elong_P/YeiP_cen"/>
</dbReference>
<dbReference type="InterPro" id="IPR013852">
    <property type="entry name" value="Transl_elong_P/YeiP_CS"/>
</dbReference>
<dbReference type="InterPro" id="IPR011768">
    <property type="entry name" value="Transl_elongation_fac_P"/>
</dbReference>
<dbReference type="InterPro" id="IPR008991">
    <property type="entry name" value="Translation_prot_SH3-like_sf"/>
</dbReference>
<dbReference type="NCBIfam" id="TIGR00038">
    <property type="entry name" value="efp"/>
    <property type="match status" value="1"/>
</dbReference>
<dbReference type="NCBIfam" id="NF001810">
    <property type="entry name" value="PRK00529.1"/>
    <property type="match status" value="1"/>
</dbReference>
<dbReference type="PANTHER" id="PTHR30053">
    <property type="entry name" value="ELONGATION FACTOR P"/>
    <property type="match status" value="1"/>
</dbReference>
<dbReference type="PANTHER" id="PTHR30053:SF12">
    <property type="entry name" value="ELONGATION FACTOR P (EF-P) FAMILY PROTEIN"/>
    <property type="match status" value="1"/>
</dbReference>
<dbReference type="Pfam" id="PF01132">
    <property type="entry name" value="EFP"/>
    <property type="match status" value="1"/>
</dbReference>
<dbReference type="Pfam" id="PF08207">
    <property type="entry name" value="EFP_N"/>
    <property type="match status" value="1"/>
</dbReference>
<dbReference type="Pfam" id="PF09285">
    <property type="entry name" value="Elong-fact-P_C"/>
    <property type="match status" value="1"/>
</dbReference>
<dbReference type="PIRSF" id="PIRSF005901">
    <property type="entry name" value="EF-P"/>
    <property type="match status" value="1"/>
</dbReference>
<dbReference type="SMART" id="SM01185">
    <property type="entry name" value="EFP"/>
    <property type="match status" value="1"/>
</dbReference>
<dbReference type="SMART" id="SM00841">
    <property type="entry name" value="Elong-fact-P_C"/>
    <property type="match status" value="1"/>
</dbReference>
<dbReference type="SUPFAM" id="SSF50249">
    <property type="entry name" value="Nucleic acid-binding proteins"/>
    <property type="match status" value="2"/>
</dbReference>
<dbReference type="SUPFAM" id="SSF50104">
    <property type="entry name" value="Translation proteins SH3-like domain"/>
    <property type="match status" value="1"/>
</dbReference>
<dbReference type="PROSITE" id="PS01275">
    <property type="entry name" value="EFP"/>
    <property type="match status" value="1"/>
</dbReference>
<sequence>MIEASKLKAGMTFETADGKLIRVLEASHHKPGKGNTIMRMKLRDVRTGSTFDTSYRPEEKFEQAIIETVPAQYLYKMDDTAYFMNNETYDQYEIPTVNIENELLYILENSEVKIQFYGTEVIGVQIPTTVELTVAETQPSIKGATVTGSGKPATMETGLVVNVPDFIEAGQKLVINTAEGTYVSRA</sequence>
<protein>
    <recommendedName>
        <fullName evidence="1">Elongation factor P</fullName>
        <shortName evidence="1">EF-P</shortName>
    </recommendedName>
</protein>
<name>EFP_STRA5</name>
<comment type="function">
    <text evidence="1">Involved in peptide bond synthesis. Stimulates efficient translation and peptide-bond synthesis on native or reconstituted 70S ribosomes in vitro. Probably functions indirectly by altering the affinity of the ribosome for aminoacyl-tRNA, thus increasing their reactivity as acceptors for peptidyl transferase.</text>
</comment>
<comment type="pathway">
    <text evidence="1">Protein biosynthesis; polypeptide chain elongation.</text>
</comment>
<comment type="subcellular location">
    <subcellularLocation>
        <location evidence="1">Cytoplasm</location>
    </subcellularLocation>
</comment>
<comment type="similarity">
    <text evidence="1">Belongs to the elongation factor P family.</text>
</comment>
<reference key="1">
    <citation type="journal article" date="2002" name="Proc. Natl. Acad. Sci. U.S.A.">
        <title>Complete genome sequence and comparative genomic analysis of an emerging human pathogen, serotype V Streptococcus agalactiae.</title>
        <authorList>
            <person name="Tettelin H."/>
            <person name="Masignani V."/>
            <person name="Cieslewicz M.J."/>
            <person name="Eisen J.A."/>
            <person name="Peterson S.N."/>
            <person name="Wessels M.R."/>
            <person name="Paulsen I.T."/>
            <person name="Nelson K.E."/>
            <person name="Margarit I."/>
            <person name="Read T.D."/>
            <person name="Madoff L.C."/>
            <person name="Wolf A.M."/>
            <person name="Beanan M.J."/>
            <person name="Brinkac L.M."/>
            <person name="Daugherty S.C."/>
            <person name="DeBoy R.T."/>
            <person name="Durkin A.S."/>
            <person name="Kolonay J.F."/>
            <person name="Madupu R."/>
            <person name="Lewis M.R."/>
            <person name="Radune D."/>
            <person name="Fedorova N.B."/>
            <person name="Scanlan D."/>
            <person name="Khouri H.M."/>
            <person name="Mulligan S."/>
            <person name="Carty H.A."/>
            <person name="Cline R.T."/>
            <person name="Van Aken S.E."/>
            <person name="Gill J."/>
            <person name="Scarselli M."/>
            <person name="Mora M."/>
            <person name="Iacobini E.T."/>
            <person name="Brettoni C."/>
            <person name="Galli G."/>
            <person name="Mariani M."/>
            <person name="Vegni F."/>
            <person name="Maione D."/>
            <person name="Rinaudo D."/>
            <person name="Rappuoli R."/>
            <person name="Telford J.L."/>
            <person name="Kasper D.L."/>
            <person name="Grandi G."/>
            <person name="Fraser C.M."/>
        </authorList>
    </citation>
    <scope>NUCLEOTIDE SEQUENCE [LARGE SCALE GENOMIC DNA]</scope>
    <source>
        <strain>ATCC BAA-611 / 2603 V/R</strain>
    </source>
</reference>
<feature type="chain" id="PRO_0000094337" description="Elongation factor P">
    <location>
        <begin position="1"/>
        <end position="186"/>
    </location>
</feature>
<accession>P64041</accession>
<accession>Q8DXZ9</accession>
<accession>Q8E3L8</accession>
<gene>
    <name evidence="1" type="primary">efp</name>
    <name type="ordered locus">SAG1695</name>
</gene>
<organism>
    <name type="scientific">Streptococcus agalactiae serotype V (strain ATCC BAA-611 / 2603 V/R)</name>
    <dbReference type="NCBI Taxonomy" id="208435"/>
    <lineage>
        <taxon>Bacteria</taxon>
        <taxon>Bacillati</taxon>
        <taxon>Bacillota</taxon>
        <taxon>Bacilli</taxon>
        <taxon>Lactobacillales</taxon>
        <taxon>Streptococcaceae</taxon>
        <taxon>Streptococcus</taxon>
    </lineage>
</organism>
<evidence type="ECO:0000255" key="1">
    <source>
        <dbReference type="HAMAP-Rule" id="MF_00141"/>
    </source>
</evidence>
<proteinExistence type="inferred from homology"/>